<evidence type="ECO:0000255" key="1">
    <source>
        <dbReference type="HAMAP-Rule" id="MF_01006"/>
    </source>
</evidence>
<sequence>MDFIELLKVIFLGIVEGITEWLPISSTGHLLLVDEFLKVNLSKDFMSMFNVVIQLGAILAVVVLFFKKLWPFSKEEKNFIKKDTFTLWFKIVVACIPGIVMIPFDSKIEDLFFNPQTIATTLILYGILFIIIENRNAGKQPKVAKLSDITYQMAFMIGLFQILAMIPGTSRSGATIIGAMLFGASRYVAAEFTFFLAIPTMFGASLLKLLKFGFTFTGAEIVALITGMLTAFIVSIIVIKFLMGYIKKNNFKVFGWYRIVLGAIVAGYFLLAR</sequence>
<reference key="1">
    <citation type="submission" date="2007-11" db="EMBL/GenBank/DDBJ databases">
        <title>Complete genome sequence of Clostridium phytofermentans ISDg.</title>
        <authorList>
            <person name="Leschine S.B."/>
            <person name="Warnick T.A."/>
            <person name="Blanchard J.L."/>
            <person name="Schnell D.J."/>
            <person name="Petit E.L."/>
            <person name="LaTouf W.G."/>
            <person name="Copeland A."/>
            <person name="Lucas S."/>
            <person name="Lapidus A."/>
            <person name="Barry K."/>
            <person name="Glavina del Rio T."/>
            <person name="Dalin E."/>
            <person name="Tice H."/>
            <person name="Pitluck S."/>
            <person name="Kiss H."/>
            <person name="Brettin T."/>
            <person name="Bruce D."/>
            <person name="Detter J.C."/>
            <person name="Han C."/>
            <person name="Kuske C."/>
            <person name="Schmutz J."/>
            <person name="Larimer F."/>
            <person name="Land M."/>
            <person name="Hauser L."/>
            <person name="Kyrpides N."/>
            <person name="Kim E.A."/>
            <person name="Richardson P."/>
        </authorList>
    </citation>
    <scope>NUCLEOTIDE SEQUENCE [LARGE SCALE GENOMIC DNA]</scope>
    <source>
        <strain>ATCC 700394 / DSM 18823 / ISDg</strain>
    </source>
</reference>
<feature type="chain" id="PRO_1000148808" description="Undecaprenyl-diphosphatase">
    <location>
        <begin position="1"/>
        <end position="273"/>
    </location>
</feature>
<feature type="transmembrane region" description="Helical" evidence="1">
    <location>
        <begin position="4"/>
        <end position="24"/>
    </location>
</feature>
<feature type="transmembrane region" description="Helical" evidence="1">
    <location>
        <begin position="45"/>
        <end position="65"/>
    </location>
</feature>
<feature type="transmembrane region" description="Helical" evidence="1">
    <location>
        <begin position="84"/>
        <end position="104"/>
    </location>
</feature>
<feature type="transmembrane region" description="Helical" evidence="1">
    <location>
        <begin position="112"/>
        <end position="132"/>
    </location>
</feature>
<feature type="transmembrane region" description="Helical" evidence="1">
    <location>
        <begin position="149"/>
        <end position="169"/>
    </location>
</feature>
<feature type="transmembrane region" description="Helical" evidence="1">
    <location>
        <begin position="187"/>
        <end position="207"/>
    </location>
</feature>
<feature type="transmembrane region" description="Helical" evidence="1">
    <location>
        <begin position="219"/>
        <end position="239"/>
    </location>
</feature>
<feature type="transmembrane region" description="Helical" evidence="1">
    <location>
        <begin position="251"/>
        <end position="271"/>
    </location>
</feature>
<protein>
    <recommendedName>
        <fullName evidence="1">Undecaprenyl-diphosphatase</fullName>
        <ecNumber evidence="1">3.6.1.27</ecNumber>
    </recommendedName>
    <alternativeName>
        <fullName evidence="1">Bacitracin resistance protein</fullName>
    </alternativeName>
    <alternativeName>
        <fullName evidence="1">Undecaprenyl pyrophosphate phosphatase</fullName>
    </alternativeName>
</protein>
<dbReference type="EC" id="3.6.1.27" evidence="1"/>
<dbReference type="EMBL" id="CP000885">
    <property type="protein sequence ID" value="ABX43118.1"/>
    <property type="molecule type" value="Genomic_DNA"/>
</dbReference>
<dbReference type="RefSeq" id="WP_012200769.1">
    <property type="nucleotide sequence ID" value="NC_010001.1"/>
</dbReference>
<dbReference type="SMR" id="A9KNK1"/>
<dbReference type="STRING" id="357809.Cphy_2758"/>
<dbReference type="KEGG" id="cpy:Cphy_2758"/>
<dbReference type="eggNOG" id="COG1968">
    <property type="taxonomic scope" value="Bacteria"/>
</dbReference>
<dbReference type="HOGENOM" id="CLU_060296_2_0_9"/>
<dbReference type="OrthoDB" id="9808289at2"/>
<dbReference type="Proteomes" id="UP000000370">
    <property type="component" value="Chromosome"/>
</dbReference>
<dbReference type="GO" id="GO:0005886">
    <property type="term" value="C:plasma membrane"/>
    <property type="evidence" value="ECO:0007669"/>
    <property type="project" value="UniProtKB-SubCell"/>
</dbReference>
<dbReference type="GO" id="GO:0050380">
    <property type="term" value="F:undecaprenyl-diphosphatase activity"/>
    <property type="evidence" value="ECO:0007669"/>
    <property type="project" value="UniProtKB-UniRule"/>
</dbReference>
<dbReference type="GO" id="GO:0071555">
    <property type="term" value="P:cell wall organization"/>
    <property type="evidence" value="ECO:0007669"/>
    <property type="project" value="UniProtKB-KW"/>
</dbReference>
<dbReference type="GO" id="GO:0009252">
    <property type="term" value="P:peptidoglycan biosynthetic process"/>
    <property type="evidence" value="ECO:0007669"/>
    <property type="project" value="UniProtKB-KW"/>
</dbReference>
<dbReference type="GO" id="GO:0008360">
    <property type="term" value="P:regulation of cell shape"/>
    <property type="evidence" value="ECO:0007669"/>
    <property type="project" value="UniProtKB-KW"/>
</dbReference>
<dbReference type="GO" id="GO:0046677">
    <property type="term" value="P:response to antibiotic"/>
    <property type="evidence" value="ECO:0007669"/>
    <property type="project" value="UniProtKB-UniRule"/>
</dbReference>
<dbReference type="HAMAP" id="MF_01006">
    <property type="entry name" value="Undec_diphosphatase"/>
    <property type="match status" value="1"/>
</dbReference>
<dbReference type="InterPro" id="IPR003824">
    <property type="entry name" value="UppP"/>
</dbReference>
<dbReference type="NCBIfam" id="NF001389">
    <property type="entry name" value="PRK00281.1-2"/>
    <property type="match status" value="1"/>
</dbReference>
<dbReference type="NCBIfam" id="NF001390">
    <property type="entry name" value="PRK00281.1-4"/>
    <property type="match status" value="1"/>
</dbReference>
<dbReference type="NCBIfam" id="NF001391">
    <property type="entry name" value="PRK00281.1-5"/>
    <property type="match status" value="1"/>
</dbReference>
<dbReference type="NCBIfam" id="TIGR00753">
    <property type="entry name" value="undec_PP_bacA"/>
    <property type="match status" value="1"/>
</dbReference>
<dbReference type="PANTHER" id="PTHR30622">
    <property type="entry name" value="UNDECAPRENYL-DIPHOSPHATASE"/>
    <property type="match status" value="1"/>
</dbReference>
<dbReference type="PANTHER" id="PTHR30622:SF3">
    <property type="entry name" value="UNDECAPRENYL-DIPHOSPHATASE"/>
    <property type="match status" value="1"/>
</dbReference>
<dbReference type="Pfam" id="PF02673">
    <property type="entry name" value="BacA"/>
    <property type="match status" value="1"/>
</dbReference>
<gene>
    <name evidence="1" type="primary">uppP</name>
    <name type="ordered locus">Cphy_2758</name>
</gene>
<proteinExistence type="inferred from homology"/>
<organism>
    <name type="scientific">Lachnoclostridium phytofermentans (strain ATCC 700394 / DSM 18823 / ISDg)</name>
    <name type="common">Clostridium phytofermentans</name>
    <dbReference type="NCBI Taxonomy" id="357809"/>
    <lineage>
        <taxon>Bacteria</taxon>
        <taxon>Bacillati</taxon>
        <taxon>Bacillota</taxon>
        <taxon>Clostridia</taxon>
        <taxon>Lachnospirales</taxon>
        <taxon>Lachnospiraceae</taxon>
    </lineage>
</organism>
<accession>A9KNK1</accession>
<comment type="function">
    <text evidence="1">Catalyzes the dephosphorylation of undecaprenyl diphosphate (UPP). Confers resistance to bacitracin.</text>
</comment>
<comment type="catalytic activity">
    <reaction evidence="1">
        <text>di-trans,octa-cis-undecaprenyl diphosphate + H2O = di-trans,octa-cis-undecaprenyl phosphate + phosphate + H(+)</text>
        <dbReference type="Rhea" id="RHEA:28094"/>
        <dbReference type="ChEBI" id="CHEBI:15377"/>
        <dbReference type="ChEBI" id="CHEBI:15378"/>
        <dbReference type="ChEBI" id="CHEBI:43474"/>
        <dbReference type="ChEBI" id="CHEBI:58405"/>
        <dbReference type="ChEBI" id="CHEBI:60392"/>
        <dbReference type="EC" id="3.6.1.27"/>
    </reaction>
</comment>
<comment type="subcellular location">
    <subcellularLocation>
        <location evidence="1">Cell membrane</location>
        <topology evidence="1">Multi-pass membrane protein</topology>
    </subcellularLocation>
</comment>
<comment type="miscellaneous">
    <text>Bacitracin is thought to be involved in the inhibition of peptidoglycan synthesis by sequestering undecaprenyl diphosphate, thereby reducing the pool of lipid carrier available.</text>
</comment>
<comment type="similarity">
    <text evidence="1">Belongs to the UppP family.</text>
</comment>
<name>UPPP_LACP7</name>
<keyword id="KW-0046">Antibiotic resistance</keyword>
<keyword id="KW-1003">Cell membrane</keyword>
<keyword id="KW-0133">Cell shape</keyword>
<keyword id="KW-0961">Cell wall biogenesis/degradation</keyword>
<keyword id="KW-0378">Hydrolase</keyword>
<keyword id="KW-0472">Membrane</keyword>
<keyword id="KW-0573">Peptidoglycan synthesis</keyword>
<keyword id="KW-1185">Reference proteome</keyword>
<keyword id="KW-0812">Transmembrane</keyword>
<keyword id="KW-1133">Transmembrane helix</keyword>